<gene>
    <name evidence="1" type="primary">rpsD</name>
    <name type="ordered locus">LCA_0844</name>
</gene>
<keyword id="KW-1185">Reference proteome</keyword>
<keyword id="KW-0687">Ribonucleoprotein</keyword>
<keyword id="KW-0689">Ribosomal protein</keyword>
<keyword id="KW-0694">RNA-binding</keyword>
<keyword id="KW-0699">rRNA-binding</keyword>
<protein>
    <recommendedName>
        <fullName evidence="1">Small ribosomal subunit protein uS4</fullName>
    </recommendedName>
    <alternativeName>
        <fullName evidence="2">30S ribosomal protein S4</fullName>
    </alternativeName>
</protein>
<comment type="function">
    <text evidence="1">One of the primary rRNA binding proteins, it binds directly to 16S rRNA where it nucleates assembly of the body of the 30S subunit.</text>
</comment>
<comment type="function">
    <text evidence="1">With S5 and S12 plays an important role in translational accuracy.</text>
</comment>
<comment type="subunit">
    <text evidence="1">Part of the 30S ribosomal subunit. Contacts protein S5. The interaction surface between S4 and S5 is involved in control of translational fidelity.</text>
</comment>
<comment type="similarity">
    <text evidence="1">Belongs to the universal ribosomal protein uS4 family.</text>
</comment>
<accession>Q38XD6</accession>
<organism>
    <name type="scientific">Latilactobacillus sakei subsp. sakei (strain 23K)</name>
    <name type="common">Lactobacillus sakei subsp. sakei</name>
    <dbReference type="NCBI Taxonomy" id="314315"/>
    <lineage>
        <taxon>Bacteria</taxon>
        <taxon>Bacillati</taxon>
        <taxon>Bacillota</taxon>
        <taxon>Bacilli</taxon>
        <taxon>Lactobacillales</taxon>
        <taxon>Lactobacillaceae</taxon>
        <taxon>Latilactobacillus</taxon>
    </lineage>
</organism>
<proteinExistence type="inferred from homology"/>
<sequence length="201" mass="22900">MSRYTGPKWKLSRRLGISLSGTGKELARRPYAPGQHGNDRRGKISEYGMQLSEKQKLRLMYGLTERQFRNLFARAGKIREGKHGVNLMILLEQRLDNIVYRLGLASTRAQARQLVNHGHVTVDGKRVDIPSYEVKPGQEISIREKSKNLVIIKDAIEGTVGRPSFVEFDADNLKGSLVRLPERSELEPEIDEALIVEFYNR</sequence>
<name>RS4_LATSS</name>
<reference key="1">
    <citation type="journal article" date="2005" name="Nat. Biotechnol.">
        <title>The complete genome sequence of the meat-borne lactic acid bacterium Lactobacillus sakei 23K.</title>
        <authorList>
            <person name="Chaillou S."/>
            <person name="Champomier-Verges M.-C."/>
            <person name="Cornet M."/>
            <person name="Crutz-Le Coq A.-M."/>
            <person name="Dudez A.-M."/>
            <person name="Martin V."/>
            <person name="Beaufils S."/>
            <person name="Darbon-Rongere E."/>
            <person name="Bossy R."/>
            <person name="Loux V."/>
            <person name="Zagorec M."/>
        </authorList>
    </citation>
    <scope>NUCLEOTIDE SEQUENCE [LARGE SCALE GENOMIC DNA]</scope>
    <source>
        <strain>23K</strain>
    </source>
</reference>
<evidence type="ECO:0000255" key="1">
    <source>
        <dbReference type="HAMAP-Rule" id="MF_01306"/>
    </source>
</evidence>
<evidence type="ECO:0000305" key="2"/>
<feature type="chain" id="PRO_0000228899" description="Small ribosomal subunit protein uS4">
    <location>
        <begin position="1"/>
        <end position="201"/>
    </location>
</feature>
<feature type="domain" description="S4 RNA-binding" evidence="1">
    <location>
        <begin position="93"/>
        <end position="153"/>
    </location>
</feature>
<dbReference type="EMBL" id="CR936503">
    <property type="protein sequence ID" value="CAI55145.1"/>
    <property type="molecule type" value="Genomic_DNA"/>
</dbReference>
<dbReference type="RefSeq" id="WP_011374547.1">
    <property type="nucleotide sequence ID" value="NC_007576.1"/>
</dbReference>
<dbReference type="SMR" id="Q38XD6"/>
<dbReference type="STRING" id="314315.LCA_0844"/>
<dbReference type="GeneID" id="57133702"/>
<dbReference type="KEGG" id="lsa:LCA_0844"/>
<dbReference type="eggNOG" id="COG0522">
    <property type="taxonomic scope" value="Bacteria"/>
</dbReference>
<dbReference type="HOGENOM" id="CLU_092403_0_1_9"/>
<dbReference type="OrthoDB" id="9803672at2"/>
<dbReference type="Proteomes" id="UP000002707">
    <property type="component" value="Chromosome"/>
</dbReference>
<dbReference type="GO" id="GO:0015935">
    <property type="term" value="C:small ribosomal subunit"/>
    <property type="evidence" value="ECO:0007669"/>
    <property type="project" value="InterPro"/>
</dbReference>
<dbReference type="GO" id="GO:0019843">
    <property type="term" value="F:rRNA binding"/>
    <property type="evidence" value="ECO:0007669"/>
    <property type="project" value="UniProtKB-UniRule"/>
</dbReference>
<dbReference type="GO" id="GO:0003735">
    <property type="term" value="F:structural constituent of ribosome"/>
    <property type="evidence" value="ECO:0007669"/>
    <property type="project" value="InterPro"/>
</dbReference>
<dbReference type="GO" id="GO:0042274">
    <property type="term" value="P:ribosomal small subunit biogenesis"/>
    <property type="evidence" value="ECO:0007669"/>
    <property type="project" value="TreeGrafter"/>
</dbReference>
<dbReference type="GO" id="GO:0006412">
    <property type="term" value="P:translation"/>
    <property type="evidence" value="ECO:0007669"/>
    <property type="project" value="UniProtKB-UniRule"/>
</dbReference>
<dbReference type="CDD" id="cd00165">
    <property type="entry name" value="S4"/>
    <property type="match status" value="1"/>
</dbReference>
<dbReference type="FunFam" id="1.10.1050.10:FF:000001">
    <property type="entry name" value="30S ribosomal protein S4"/>
    <property type="match status" value="1"/>
</dbReference>
<dbReference type="FunFam" id="3.10.290.10:FF:000001">
    <property type="entry name" value="30S ribosomal protein S4"/>
    <property type="match status" value="1"/>
</dbReference>
<dbReference type="Gene3D" id="1.10.1050.10">
    <property type="entry name" value="Ribosomal Protein S4 Delta 41, Chain A, domain 1"/>
    <property type="match status" value="1"/>
</dbReference>
<dbReference type="Gene3D" id="3.10.290.10">
    <property type="entry name" value="RNA-binding S4 domain"/>
    <property type="match status" value="1"/>
</dbReference>
<dbReference type="HAMAP" id="MF_01306_B">
    <property type="entry name" value="Ribosomal_uS4_B"/>
    <property type="match status" value="1"/>
</dbReference>
<dbReference type="InterPro" id="IPR022801">
    <property type="entry name" value="Ribosomal_uS4"/>
</dbReference>
<dbReference type="InterPro" id="IPR005709">
    <property type="entry name" value="Ribosomal_uS4_bac-type"/>
</dbReference>
<dbReference type="InterPro" id="IPR018079">
    <property type="entry name" value="Ribosomal_uS4_CS"/>
</dbReference>
<dbReference type="InterPro" id="IPR001912">
    <property type="entry name" value="Ribosomal_uS4_N"/>
</dbReference>
<dbReference type="InterPro" id="IPR002942">
    <property type="entry name" value="S4_RNA-bd"/>
</dbReference>
<dbReference type="InterPro" id="IPR036986">
    <property type="entry name" value="S4_RNA-bd_sf"/>
</dbReference>
<dbReference type="NCBIfam" id="NF003717">
    <property type="entry name" value="PRK05327.1"/>
    <property type="match status" value="1"/>
</dbReference>
<dbReference type="NCBIfam" id="TIGR01017">
    <property type="entry name" value="rpsD_bact"/>
    <property type="match status" value="1"/>
</dbReference>
<dbReference type="PANTHER" id="PTHR11831">
    <property type="entry name" value="30S 40S RIBOSOMAL PROTEIN"/>
    <property type="match status" value="1"/>
</dbReference>
<dbReference type="PANTHER" id="PTHR11831:SF4">
    <property type="entry name" value="SMALL RIBOSOMAL SUBUNIT PROTEIN US4M"/>
    <property type="match status" value="1"/>
</dbReference>
<dbReference type="Pfam" id="PF00163">
    <property type="entry name" value="Ribosomal_S4"/>
    <property type="match status" value="1"/>
</dbReference>
<dbReference type="Pfam" id="PF01479">
    <property type="entry name" value="S4"/>
    <property type="match status" value="1"/>
</dbReference>
<dbReference type="SMART" id="SM01390">
    <property type="entry name" value="Ribosomal_S4"/>
    <property type="match status" value="1"/>
</dbReference>
<dbReference type="SMART" id="SM00363">
    <property type="entry name" value="S4"/>
    <property type="match status" value="1"/>
</dbReference>
<dbReference type="SUPFAM" id="SSF55174">
    <property type="entry name" value="Alpha-L RNA-binding motif"/>
    <property type="match status" value="1"/>
</dbReference>
<dbReference type="PROSITE" id="PS00632">
    <property type="entry name" value="RIBOSOMAL_S4"/>
    <property type="match status" value="1"/>
</dbReference>
<dbReference type="PROSITE" id="PS50889">
    <property type="entry name" value="S4"/>
    <property type="match status" value="1"/>
</dbReference>